<organism>
    <name type="scientific">Salmonella schwarzengrund (strain CVM19633)</name>
    <dbReference type="NCBI Taxonomy" id="439843"/>
    <lineage>
        <taxon>Bacteria</taxon>
        <taxon>Pseudomonadati</taxon>
        <taxon>Pseudomonadota</taxon>
        <taxon>Gammaproteobacteria</taxon>
        <taxon>Enterobacterales</taxon>
        <taxon>Enterobacteriaceae</taxon>
        <taxon>Salmonella</taxon>
    </lineage>
</organism>
<name>6PGL_SALSV</name>
<dbReference type="EC" id="3.1.1.31" evidence="1"/>
<dbReference type="EMBL" id="CP001127">
    <property type="protein sequence ID" value="ACF90941.1"/>
    <property type="molecule type" value="Genomic_DNA"/>
</dbReference>
<dbReference type="RefSeq" id="WP_000815468.1">
    <property type="nucleotide sequence ID" value="NC_011094.1"/>
</dbReference>
<dbReference type="SMR" id="B4TQT0"/>
<dbReference type="KEGG" id="sew:SeSA_A0935"/>
<dbReference type="HOGENOM" id="CLU_038716_2_0_6"/>
<dbReference type="UniPathway" id="UPA00115">
    <property type="reaction ID" value="UER00409"/>
</dbReference>
<dbReference type="Proteomes" id="UP000001865">
    <property type="component" value="Chromosome"/>
</dbReference>
<dbReference type="GO" id="GO:0005829">
    <property type="term" value="C:cytosol"/>
    <property type="evidence" value="ECO:0007669"/>
    <property type="project" value="TreeGrafter"/>
</dbReference>
<dbReference type="GO" id="GO:0017057">
    <property type="term" value="F:6-phosphogluconolactonase activity"/>
    <property type="evidence" value="ECO:0007669"/>
    <property type="project" value="UniProtKB-UniRule"/>
</dbReference>
<dbReference type="GO" id="GO:0006006">
    <property type="term" value="P:glucose metabolic process"/>
    <property type="evidence" value="ECO:0007669"/>
    <property type="project" value="UniProtKB-KW"/>
</dbReference>
<dbReference type="GO" id="GO:0009051">
    <property type="term" value="P:pentose-phosphate shunt, oxidative branch"/>
    <property type="evidence" value="ECO:0007669"/>
    <property type="project" value="UniProtKB-UniRule"/>
</dbReference>
<dbReference type="FunFam" id="2.130.10.10:FF:000051">
    <property type="entry name" value="6-phosphogluconolactonase"/>
    <property type="match status" value="1"/>
</dbReference>
<dbReference type="Gene3D" id="2.130.10.10">
    <property type="entry name" value="YVTN repeat-like/Quinoprotein amine dehydrogenase"/>
    <property type="match status" value="1"/>
</dbReference>
<dbReference type="HAMAP" id="MF_01605">
    <property type="entry name" value="6P_gluconolactonase"/>
    <property type="match status" value="1"/>
</dbReference>
<dbReference type="InterPro" id="IPR022528">
    <property type="entry name" value="6-phosphogluconolactonase_YbhE"/>
</dbReference>
<dbReference type="InterPro" id="IPR050282">
    <property type="entry name" value="Cycloisomerase_2"/>
</dbReference>
<dbReference type="InterPro" id="IPR019405">
    <property type="entry name" value="Lactonase_7-beta_prop"/>
</dbReference>
<dbReference type="InterPro" id="IPR011045">
    <property type="entry name" value="N2O_reductase_N"/>
</dbReference>
<dbReference type="InterPro" id="IPR015943">
    <property type="entry name" value="WD40/YVTN_repeat-like_dom_sf"/>
</dbReference>
<dbReference type="NCBIfam" id="NF008258">
    <property type="entry name" value="PRK11028.1"/>
    <property type="match status" value="1"/>
</dbReference>
<dbReference type="PANTHER" id="PTHR30344:SF1">
    <property type="entry name" value="6-PHOSPHOGLUCONOLACTONASE"/>
    <property type="match status" value="1"/>
</dbReference>
<dbReference type="PANTHER" id="PTHR30344">
    <property type="entry name" value="6-PHOSPHOGLUCONOLACTONASE-RELATED"/>
    <property type="match status" value="1"/>
</dbReference>
<dbReference type="Pfam" id="PF10282">
    <property type="entry name" value="Lactonase"/>
    <property type="match status" value="1"/>
</dbReference>
<dbReference type="SUPFAM" id="SSF50974">
    <property type="entry name" value="Nitrous oxide reductase, N-terminal domain"/>
    <property type="match status" value="2"/>
</dbReference>
<evidence type="ECO:0000255" key="1">
    <source>
        <dbReference type="HAMAP-Rule" id="MF_01605"/>
    </source>
</evidence>
<sequence length="331" mass="36337">MKQTVYTASPESQQIHVWSLNHEGTLTLVQVVDVPGQVQPMVVSPDKRYLYVGVRPEFRVLAYRIAPDDGALTFAAESALPGSPTHISTDHHGRFVFVGSYNAGNVSVTRLQDGLPVELVDVVEGLDGCHSANITPDNRTLWVPALKQDRICLFTLSDDGHLVAQEPAEVNTVEGAGPRHMVFHPNRQYAYCVNELNSSVDVWQLKNPHGEIECVQTLDMMPADFSDTRWAADIHITPDGRHLYACDRTASLITVFSVSEDGSVLSVEGFQPTEAQPRGFNIDNSGKYLIAAGQKSHHIAVYEITGTQGLLTEKGRYAVGQGPMWVVVNAY</sequence>
<accession>B4TQT0</accession>
<proteinExistence type="inferred from homology"/>
<comment type="function">
    <text evidence="1">Catalyzes the hydrolysis of 6-phosphogluconolactone to 6-phosphogluconate.</text>
</comment>
<comment type="catalytic activity">
    <reaction evidence="1">
        <text>6-phospho-D-glucono-1,5-lactone + H2O = 6-phospho-D-gluconate + H(+)</text>
        <dbReference type="Rhea" id="RHEA:12556"/>
        <dbReference type="ChEBI" id="CHEBI:15377"/>
        <dbReference type="ChEBI" id="CHEBI:15378"/>
        <dbReference type="ChEBI" id="CHEBI:57955"/>
        <dbReference type="ChEBI" id="CHEBI:58759"/>
        <dbReference type="EC" id="3.1.1.31"/>
    </reaction>
</comment>
<comment type="pathway">
    <text evidence="1">Carbohydrate degradation; pentose phosphate pathway; D-ribulose 5-phosphate from D-glucose 6-phosphate (oxidative stage): step 2/3.</text>
</comment>
<comment type="similarity">
    <text evidence="1">Belongs to the cycloisomerase 2 family.</text>
</comment>
<feature type="chain" id="PRO_1000148168" description="6-phosphogluconolactonase">
    <location>
        <begin position="1"/>
        <end position="331"/>
    </location>
</feature>
<keyword id="KW-0119">Carbohydrate metabolism</keyword>
<keyword id="KW-0313">Glucose metabolism</keyword>
<keyword id="KW-0378">Hydrolase</keyword>
<protein>
    <recommendedName>
        <fullName evidence="1">6-phosphogluconolactonase</fullName>
        <shortName evidence="1">6-P-gluconolactonase</shortName>
        <ecNumber evidence="1">3.1.1.31</ecNumber>
    </recommendedName>
</protein>
<gene>
    <name evidence="1" type="primary">pgl</name>
    <name type="ordered locus">SeSA_A0935</name>
</gene>
<reference key="1">
    <citation type="journal article" date="2011" name="J. Bacteriol.">
        <title>Comparative genomics of 28 Salmonella enterica isolates: evidence for CRISPR-mediated adaptive sublineage evolution.</title>
        <authorList>
            <person name="Fricke W.F."/>
            <person name="Mammel M.K."/>
            <person name="McDermott P.F."/>
            <person name="Tartera C."/>
            <person name="White D.G."/>
            <person name="Leclerc J.E."/>
            <person name="Ravel J."/>
            <person name="Cebula T.A."/>
        </authorList>
    </citation>
    <scope>NUCLEOTIDE SEQUENCE [LARGE SCALE GENOMIC DNA]</scope>
    <source>
        <strain>CVM19633</strain>
    </source>
</reference>